<feature type="signal peptide" evidence="2">
    <location>
        <begin position="1"/>
        <end position="26"/>
    </location>
</feature>
<feature type="propeptide" id="PRO_0000353130" evidence="7">
    <location>
        <begin position="27"/>
        <end position="80"/>
    </location>
</feature>
<feature type="peptide" id="PRO_0000353131" description="Conantokin-P" evidence="7">
    <location>
        <begin position="81"/>
        <end position="104"/>
    </location>
</feature>
<feature type="region of interest" description="Disordered" evidence="3">
    <location>
        <begin position="29"/>
        <end position="87"/>
    </location>
</feature>
<feature type="compositionally biased region" description="Basic and acidic residues" evidence="3">
    <location>
        <begin position="52"/>
        <end position="66"/>
    </location>
</feature>
<feature type="binding site" description="via 4-carboxyglutamate" evidence="1">
    <location>
        <position position="90"/>
    </location>
    <ligand>
        <name>a divalent metal cation</name>
        <dbReference type="ChEBI" id="CHEBI:60240"/>
    </ligand>
</feature>
<feature type="binding site" description="via 4-carboxyglutamate" evidence="1">
    <location>
        <position position="94"/>
    </location>
    <ligand>
        <name>a divalent metal cation</name>
        <dbReference type="ChEBI" id="CHEBI:60240"/>
    </ligand>
</feature>
<feature type="modified residue" description="4-carboxyglutamate" evidence="1 7">
    <location>
        <position position="83"/>
    </location>
</feature>
<feature type="modified residue" description="4-carboxyglutamate" evidence="1 7">
    <location>
        <position position="84"/>
    </location>
</feature>
<feature type="modified residue" description="4-carboxyglutamate" evidence="1 7">
    <location>
        <position position="90"/>
    </location>
</feature>
<feature type="modified residue" description="4-carboxyglutamate" evidence="1 7">
    <location>
        <position position="94"/>
    </location>
</feature>
<feature type="modified residue" description="4-carboxyglutamate" evidence="7">
    <location>
        <position position="103"/>
    </location>
</feature>
<feature type="disulfide bond" evidence="7">
    <location>
        <begin position="91"/>
        <end position="104"/>
    </location>
</feature>
<name>CKP_CONPU</name>
<comment type="function">
    <text evidence="4">Conantokins inhibit N-methyl-D-aspartate (NMDA) receptors. This toxin has the highest potency for the NR2B/GRIN2B subunit, followed by NR2A/GRIN2A, NR2C/GRIN2C, and NR2D/GRIN2D subunits.</text>
</comment>
<comment type="subcellular location">
    <subcellularLocation>
        <location evidence="7">Secreted</location>
    </subcellularLocation>
</comment>
<comment type="tissue specificity">
    <text evidence="7">Expressed by the venom duct.</text>
</comment>
<comment type="domain">
    <text evidence="6">The cysteine framework is C-C.</text>
</comment>
<comment type="miscellaneous">
    <text evidence="4">Adopts an alpha-helical conformation in presence and in absence of divalent cations. Calcium facilitates disulfide bond formation of the synthetic peptide.</text>
</comment>
<comment type="similarity">
    <text evidence="6">Belongs to the conotoxin B superfamily.</text>
</comment>
<evidence type="ECO:0000250" key="1">
    <source>
        <dbReference type="UniProtKB" id="P07231"/>
    </source>
</evidence>
<evidence type="ECO:0000255" key="2"/>
<evidence type="ECO:0000256" key="3">
    <source>
        <dbReference type="SAM" id="MobiDB-lite"/>
    </source>
</evidence>
<evidence type="ECO:0000269" key="4">
    <source>
    </source>
</evidence>
<evidence type="ECO:0000303" key="5">
    <source>
    </source>
</evidence>
<evidence type="ECO:0000305" key="6"/>
<evidence type="ECO:0000305" key="7">
    <source>
    </source>
</evidence>
<protein>
    <recommendedName>
        <fullName evidence="5">Conantokin-P</fullName>
        <shortName evidence="5">Con-P</shortName>
    </recommendedName>
</protein>
<keyword id="KW-0106">Calcium</keyword>
<keyword id="KW-1015">Disulfide bond</keyword>
<keyword id="KW-0301">Gamma-carboxyglutamic acid</keyword>
<keyword id="KW-0872">Ion channel impairing toxin</keyword>
<keyword id="KW-1028">Ionotropic glutamate receptor inhibitor</keyword>
<keyword id="KW-0460">Magnesium</keyword>
<keyword id="KW-0479">Metal-binding</keyword>
<keyword id="KW-0528">Neurotoxin</keyword>
<keyword id="KW-0629">Postsynaptic neurotoxin</keyword>
<keyword id="KW-0964">Secreted</keyword>
<keyword id="KW-0732">Signal</keyword>
<keyword id="KW-0800">Toxin</keyword>
<sequence length="104" mass="12033">MQLYTYLYLLVPLVTFHLILSTGTLAHGGTLTERRSTDTTALKPEPVLLQKSDARSTDDNDKDRLTQMKRILKKRGNKARGEEEHSKYQECLREIRVNKVQQEC</sequence>
<organism>
    <name type="scientific">Conus purpurascens</name>
    <name type="common">Purple cone</name>
    <dbReference type="NCBI Taxonomy" id="41690"/>
    <lineage>
        <taxon>Eukaryota</taxon>
        <taxon>Metazoa</taxon>
        <taxon>Spiralia</taxon>
        <taxon>Lophotrochozoa</taxon>
        <taxon>Mollusca</taxon>
        <taxon>Gastropoda</taxon>
        <taxon>Caenogastropoda</taxon>
        <taxon>Neogastropoda</taxon>
        <taxon>Conoidea</taxon>
        <taxon>Conidae</taxon>
        <taxon>Conus</taxon>
        <taxon>Chelyconus</taxon>
    </lineage>
</organism>
<accession>P0C8E3</accession>
<dbReference type="SMR" id="P0C8E3"/>
<dbReference type="ConoServer" id="3531">
    <property type="toxin name" value="Conantokin-P precursor"/>
</dbReference>
<dbReference type="GO" id="GO:0005576">
    <property type="term" value="C:extracellular region"/>
    <property type="evidence" value="ECO:0007669"/>
    <property type="project" value="UniProtKB-SubCell"/>
</dbReference>
<dbReference type="GO" id="GO:0035792">
    <property type="term" value="C:host cell postsynaptic membrane"/>
    <property type="evidence" value="ECO:0007669"/>
    <property type="project" value="UniProtKB-KW"/>
</dbReference>
<dbReference type="GO" id="GO:0099106">
    <property type="term" value="F:ion channel regulator activity"/>
    <property type="evidence" value="ECO:0007669"/>
    <property type="project" value="UniProtKB-KW"/>
</dbReference>
<dbReference type="GO" id="GO:0046872">
    <property type="term" value="F:metal ion binding"/>
    <property type="evidence" value="ECO:0007669"/>
    <property type="project" value="UniProtKB-KW"/>
</dbReference>
<dbReference type="GO" id="GO:0090729">
    <property type="term" value="F:toxin activity"/>
    <property type="evidence" value="ECO:0007669"/>
    <property type="project" value="UniProtKB-KW"/>
</dbReference>
<dbReference type="InterPro" id="IPR005918">
    <property type="entry name" value="Conantokin_CS"/>
</dbReference>
<dbReference type="Pfam" id="PF10550">
    <property type="entry name" value="Toxin_36"/>
    <property type="match status" value="1"/>
</dbReference>
<dbReference type="PROSITE" id="PS60025">
    <property type="entry name" value="CONANTOKIN"/>
    <property type="match status" value="1"/>
</dbReference>
<reference key="1">
    <citation type="journal article" date="2008" name="Toxicon">
        <title>Conantokin-P, an unusual conantokin with a long disulfide loop.</title>
        <authorList>
            <person name="Gowd K.H."/>
            <person name="Twede V."/>
            <person name="Watkins M."/>
            <person name="Krishnan K.S."/>
            <person name="Teichert R.W."/>
            <person name="Bulaj G."/>
            <person name="Olivera B.M."/>
        </authorList>
    </citation>
    <scope>NUCLEOTIDE SEQUENCE [MRNA]</scope>
    <scope>SYNTHESIS OF 81-104</scope>
    <scope>FUNCTION</scope>
    <scope>DISULFIDE BOND</scope>
    <scope>GAMMA-CARBOXYGLUTAMATION AT GLU-83; GLU-84; GLU-90; GLU-94 AND GLU-103</scope>
    <source>
        <tissue>Venom duct</tissue>
    </source>
</reference>
<proteinExistence type="evidence at protein level"/>